<evidence type="ECO:0000250" key="1"/>
<evidence type="ECO:0000255" key="2">
    <source>
        <dbReference type="PROSITE-ProRule" id="PRU00723"/>
    </source>
</evidence>
<evidence type="ECO:0000305" key="3"/>
<protein>
    <recommendedName>
        <fullName>mRNA 3'-end-processing protein YTH1</fullName>
    </recommendedName>
</protein>
<feature type="chain" id="PRO_0000238535" description="mRNA 3'-end-processing protein YTH1">
    <location>
        <begin position="1"/>
        <end position="209"/>
    </location>
</feature>
<feature type="zinc finger region" description="C3H1-type 1" evidence="2">
    <location>
        <begin position="29"/>
        <end position="60"/>
    </location>
</feature>
<feature type="zinc finger region" description="C3H1-type 2" evidence="2">
    <location>
        <begin position="62"/>
        <end position="89"/>
    </location>
</feature>
<feature type="zinc finger region" description="C3H1-type 3" evidence="2">
    <location>
        <begin position="90"/>
        <end position="118"/>
    </location>
</feature>
<feature type="zinc finger region" description="C3H1-type 4" evidence="2">
    <location>
        <begin position="119"/>
        <end position="146"/>
    </location>
</feature>
<feature type="zinc finger region" description="C3H1-type 5" evidence="2">
    <location>
        <begin position="148"/>
        <end position="171"/>
    </location>
</feature>
<sequence>MGSVVHPDTEKYPFKFEPFLRQEYSFALDPDRPVCEDFNYKIGPSSCPNGVFCPKKHVLGIFQNKIVCKHWLRGLCKKNDNCEYLHEYNLRKMPECVFYAKNGFCTQSPECQYLHIDPLSKVPPCEDYEMGFCPKGSACEKRHIKKVLCQRYINGFCPLGRRECDMEHPFFYIPDLSSPLRIKKDEEINTRKRDEENERRLNAIINGEI</sequence>
<name>YTH1_CANGA</name>
<gene>
    <name type="primary">YTH1</name>
    <name type="ordered locus">CAGL0G01694g</name>
</gene>
<dbReference type="EMBL" id="CR380953">
    <property type="protein sequence ID" value="CAG59361.1"/>
    <property type="molecule type" value="Genomic_DNA"/>
</dbReference>
<dbReference type="RefSeq" id="XP_446434.1">
    <property type="nucleotide sequence ID" value="XM_446434.1"/>
</dbReference>
<dbReference type="SMR" id="Q6FTL0"/>
<dbReference type="FunCoup" id="Q6FTL0">
    <property type="interactions" value="101"/>
</dbReference>
<dbReference type="STRING" id="284593.Q6FTL0"/>
<dbReference type="EnsemblFungi" id="CAGL0G01694g-T">
    <property type="protein sequence ID" value="CAGL0G01694g-T-p1"/>
    <property type="gene ID" value="CAGL0G01694g"/>
</dbReference>
<dbReference type="KEGG" id="cgr:2888311"/>
<dbReference type="CGD" id="CAL0137715">
    <property type="gene designation" value="CAGL0G01694g"/>
</dbReference>
<dbReference type="VEuPathDB" id="FungiDB:B1J91_G01694g"/>
<dbReference type="VEuPathDB" id="FungiDB:CAGL0G01694g"/>
<dbReference type="eggNOG" id="KOG1040">
    <property type="taxonomic scope" value="Eukaryota"/>
</dbReference>
<dbReference type="HOGENOM" id="CLU_024513_1_2_1"/>
<dbReference type="InParanoid" id="Q6FTL0"/>
<dbReference type="Proteomes" id="UP000002428">
    <property type="component" value="Chromosome G"/>
</dbReference>
<dbReference type="GO" id="GO:0005829">
    <property type="term" value="C:cytosol"/>
    <property type="evidence" value="ECO:0007669"/>
    <property type="project" value="EnsemblFungi"/>
</dbReference>
<dbReference type="GO" id="GO:0005847">
    <property type="term" value="C:mRNA cleavage and polyadenylation specificity factor complex"/>
    <property type="evidence" value="ECO:0007669"/>
    <property type="project" value="EnsemblFungi"/>
</dbReference>
<dbReference type="GO" id="GO:0003723">
    <property type="term" value="F:RNA binding"/>
    <property type="evidence" value="ECO:0007669"/>
    <property type="project" value="UniProtKB-KW"/>
</dbReference>
<dbReference type="GO" id="GO:0008270">
    <property type="term" value="F:zinc ion binding"/>
    <property type="evidence" value="ECO:0007669"/>
    <property type="project" value="UniProtKB-KW"/>
</dbReference>
<dbReference type="GO" id="GO:0006397">
    <property type="term" value="P:mRNA processing"/>
    <property type="evidence" value="ECO:0007669"/>
    <property type="project" value="UniProtKB-KW"/>
</dbReference>
<dbReference type="FunFam" id="4.10.1000.10:FF:000012">
    <property type="entry name" value="cleavage and polyadenylation specificity factor subunit 4"/>
    <property type="match status" value="1"/>
</dbReference>
<dbReference type="Gene3D" id="4.10.1000.10">
    <property type="entry name" value="Zinc finger, CCCH-type"/>
    <property type="match status" value="2"/>
</dbReference>
<dbReference type="InterPro" id="IPR045348">
    <property type="entry name" value="CPSF4/Yth1"/>
</dbReference>
<dbReference type="InterPro" id="IPR000571">
    <property type="entry name" value="Znf_CCCH"/>
</dbReference>
<dbReference type="InterPro" id="IPR036855">
    <property type="entry name" value="Znf_CCCH_sf"/>
</dbReference>
<dbReference type="PANTHER" id="PTHR23102:SF24">
    <property type="entry name" value="CLEAVAGE AND POLYADENYLATION SPECIFICITY FACTOR SUBUNIT 4"/>
    <property type="match status" value="1"/>
</dbReference>
<dbReference type="PANTHER" id="PTHR23102">
    <property type="entry name" value="CLEAVAGE AND POLYADENYLATION SPECIFICITY FACTOR SUBUNIT 4-RELATED"/>
    <property type="match status" value="1"/>
</dbReference>
<dbReference type="SMART" id="SM00356">
    <property type="entry name" value="ZnF_C3H1"/>
    <property type="match status" value="5"/>
</dbReference>
<dbReference type="SUPFAM" id="SSF90229">
    <property type="entry name" value="CCCH zinc finger"/>
    <property type="match status" value="1"/>
</dbReference>
<dbReference type="PROSITE" id="PS50103">
    <property type="entry name" value="ZF_C3H1"/>
    <property type="match status" value="5"/>
</dbReference>
<proteinExistence type="inferred from homology"/>
<comment type="function">
    <text evidence="1">Component of the cleavage factor I (CF I) involved in pre-mRNA 3'-end processing.</text>
</comment>
<comment type="subcellular location">
    <subcellularLocation>
        <location evidence="1">Nucleus</location>
    </subcellularLocation>
</comment>
<comment type="similarity">
    <text evidence="3">Belongs to the CPSF4/YTH1 family.</text>
</comment>
<reference key="1">
    <citation type="journal article" date="2004" name="Nature">
        <title>Genome evolution in yeasts.</title>
        <authorList>
            <person name="Dujon B."/>
            <person name="Sherman D."/>
            <person name="Fischer G."/>
            <person name="Durrens P."/>
            <person name="Casaregola S."/>
            <person name="Lafontaine I."/>
            <person name="de Montigny J."/>
            <person name="Marck C."/>
            <person name="Neuveglise C."/>
            <person name="Talla E."/>
            <person name="Goffard N."/>
            <person name="Frangeul L."/>
            <person name="Aigle M."/>
            <person name="Anthouard V."/>
            <person name="Babour A."/>
            <person name="Barbe V."/>
            <person name="Barnay S."/>
            <person name="Blanchin S."/>
            <person name="Beckerich J.-M."/>
            <person name="Beyne E."/>
            <person name="Bleykasten C."/>
            <person name="Boisrame A."/>
            <person name="Boyer J."/>
            <person name="Cattolico L."/>
            <person name="Confanioleri F."/>
            <person name="de Daruvar A."/>
            <person name="Despons L."/>
            <person name="Fabre E."/>
            <person name="Fairhead C."/>
            <person name="Ferry-Dumazet H."/>
            <person name="Groppi A."/>
            <person name="Hantraye F."/>
            <person name="Hennequin C."/>
            <person name="Jauniaux N."/>
            <person name="Joyet P."/>
            <person name="Kachouri R."/>
            <person name="Kerrest A."/>
            <person name="Koszul R."/>
            <person name="Lemaire M."/>
            <person name="Lesur I."/>
            <person name="Ma L."/>
            <person name="Muller H."/>
            <person name="Nicaud J.-M."/>
            <person name="Nikolski M."/>
            <person name="Oztas S."/>
            <person name="Ozier-Kalogeropoulos O."/>
            <person name="Pellenz S."/>
            <person name="Potier S."/>
            <person name="Richard G.-F."/>
            <person name="Straub M.-L."/>
            <person name="Suleau A."/>
            <person name="Swennen D."/>
            <person name="Tekaia F."/>
            <person name="Wesolowski-Louvel M."/>
            <person name="Westhof E."/>
            <person name="Wirth B."/>
            <person name="Zeniou-Meyer M."/>
            <person name="Zivanovic Y."/>
            <person name="Bolotin-Fukuhara M."/>
            <person name="Thierry A."/>
            <person name="Bouchier C."/>
            <person name="Caudron B."/>
            <person name="Scarpelli C."/>
            <person name="Gaillardin C."/>
            <person name="Weissenbach J."/>
            <person name="Wincker P."/>
            <person name="Souciet J.-L."/>
        </authorList>
    </citation>
    <scope>NUCLEOTIDE SEQUENCE [LARGE SCALE GENOMIC DNA]</scope>
    <source>
        <strain>ATCC 2001 / BCRC 20586 / JCM 3761 / NBRC 0622 / NRRL Y-65 / CBS 138</strain>
    </source>
</reference>
<keyword id="KW-0479">Metal-binding</keyword>
<keyword id="KW-0507">mRNA processing</keyword>
<keyword id="KW-0539">Nucleus</keyword>
<keyword id="KW-1185">Reference proteome</keyword>
<keyword id="KW-0677">Repeat</keyword>
<keyword id="KW-0694">RNA-binding</keyword>
<keyword id="KW-0862">Zinc</keyword>
<keyword id="KW-0863">Zinc-finger</keyword>
<accession>Q6FTL0</accession>
<organism>
    <name type="scientific">Candida glabrata (strain ATCC 2001 / BCRC 20586 / JCM 3761 / NBRC 0622 / NRRL Y-65 / CBS 138)</name>
    <name type="common">Yeast</name>
    <name type="synonym">Nakaseomyces glabratus</name>
    <dbReference type="NCBI Taxonomy" id="284593"/>
    <lineage>
        <taxon>Eukaryota</taxon>
        <taxon>Fungi</taxon>
        <taxon>Dikarya</taxon>
        <taxon>Ascomycota</taxon>
        <taxon>Saccharomycotina</taxon>
        <taxon>Saccharomycetes</taxon>
        <taxon>Saccharomycetales</taxon>
        <taxon>Saccharomycetaceae</taxon>
        <taxon>Nakaseomyces</taxon>
    </lineage>
</organism>